<proteinExistence type="inferred from homology"/>
<sequence>MQKYDIKTFQGMILALQDYWAQNGCTIVQPLDMEVGAGTSHPMTCLRALGPEPMSTAYVQPSRRPTDGRYGENPNRLQHYYQFQVALKPSPDNIQELYLGSLEVLGIDPLVHDIRFVEDNWENPTLGAWGLGWEVWLNGMEVTQFTYFQQVGGLECKPVTGEITYGIERLAMYIQEVDSVYDLTWNIAPDGSKVTYGDIFHQNEVEQSTYNFEHADVDFLFSFFEQCEKECQQLLELEKPLPLPAYERILKAAHAFNLLDARKAISVTERQRYILRIRNLTKSVAEAYYASREALGFPMCKKEQA</sequence>
<comment type="catalytic activity">
    <reaction evidence="1">
        <text>tRNA(Gly) + glycine + ATP = glycyl-tRNA(Gly) + AMP + diphosphate</text>
        <dbReference type="Rhea" id="RHEA:16013"/>
        <dbReference type="Rhea" id="RHEA-COMP:9664"/>
        <dbReference type="Rhea" id="RHEA-COMP:9683"/>
        <dbReference type="ChEBI" id="CHEBI:30616"/>
        <dbReference type="ChEBI" id="CHEBI:33019"/>
        <dbReference type="ChEBI" id="CHEBI:57305"/>
        <dbReference type="ChEBI" id="CHEBI:78442"/>
        <dbReference type="ChEBI" id="CHEBI:78522"/>
        <dbReference type="ChEBI" id="CHEBI:456215"/>
        <dbReference type="EC" id="6.1.1.14"/>
    </reaction>
</comment>
<comment type="subunit">
    <text evidence="1">Tetramer of two alpha and two beta subunits.</text>
</comment>
<comment type="subcellular location">
    <subcellularLocation>
        <location evidence="1">Cytoplasm</location>
    </subcellularLocation>
</comment>
<comment type="similarity">
    <text evidence="1">Belongs to the class-II aminoacyl-tRNA synthetase family.</text>
</comment>
<organism>
    <name type="scientific">Vibrio vulnificus (strain CMCP6)</name>
    <dbReference type="NCBI Taxonomy" id="216895"/>
    <lineage>
        <taxon>Bacteria</taxon>
        <taxon>Pseudomonadati</taxon>
        <taxon>Pseudomonadota</taxon>
        <taxon>Gammaproteobacteria</taxon>
        <taxon>Vibrionales</taxon>
        <taxon>Vibrionaceae</taxon>
        <taxon>Vibrio</taxon>
    </lineage>
</organism>
<evidence type="ECO:0000255" key="1">
    <source>
        <dbReference type="HAMAP-Rule" id="MF_00254"/>
    </source>
</evidence>
<feature type="chain" id="PRO_0000072880" description="Glycine--tRNA ligase alpha subunit">
    <location>
        <begin position="1"/>
        <end position="305"/>
    </location>
</feature>
<reference key="1">
    <citation type="submission" date="2002-12" db="EMBL/GenBank/DDBJ databases">
        <title>Complete genome sequence of Vibrio vulnificus CMCP6.</title>
        <authorList>
            <person name="Rhee J.H."/>
            <person name="Kim S.Y."/>
            <person name="Chung S.S."/>
            <person name="Kim J.J."/>
            <person name="Moon Y.H."/>
            <person name="Jeong H."/>
            <person name="Choy H.E."/>
        </authorList>
    </citation>
    <scope>NUCLEOTIDE SEQUENCE [LARGE SCALE GENOMIC DNA]</scope>
    <source>
        <strain>CMCP6</strain>
    </source>
</reference>
<gene>
    <name evidence="1" type="primary">glyQ</name>
    <name type="ordered locus">VV1_0989</name>
</gene>
<accession>Q8DDJ8</accession>
<keyword id="KW-0030">Aminoacyl-tRNA synthetase</keyword>
<keyword id="KW-0067">ATP-binding</keyword>
<keyword id="KW-0963">Cytoplasm</keyword>
<keyword id="KW-0436">Ligase</keyword>
<keyword id="KW-0547">Nucleotide-binding</keyword>
<keyword id="KW-0648">Protein biosynthesis</keyword>
<protein>
    <recommendedName>
        <fullName evidence="1">Glycine--tRNA ligase alpha subunit</fullName>
        <ecNumber evidence="1">6.1.1.14</ecNumber>
    </recommendedName>
    <alternativeName>
        <fullName evidence="1">Glycyl-tRNA synthetase alpha subunit</fullName>
        <shortName evidence="1">GlyRS</shortName>
    </alternativeName>
</protein>
<dbReference type="EC" id="6.1.1.14" evidence="1"/>
<dbReference type="EMBL" id="AE016795">
    <property type="protein sequence ID" value="AAO09479.1"/>
    <property type="molecule type" value="Genomic_DNA"/>
</dbReference>
<dbReference type="RefSeq" id="WP_011079026.1">
    <property type="nucleotide sequence ID" value="NC_004459.3"/>
</dbReference>
<dbReference type="SMR" id="Q8DDJ8"/>
<dbReference type="KEGG" id="vvu:VV1_0989"/>
<dbReference type="HOGENOM" id="CLU_057066_1_0_6"/>
<dbReference type="Proteomes" id="UP000002275">
    <property type="component" value="Chromosome 1"/>
</dbReference>
<dbReference type="GO" id="GO:0005829">
    <property type="term" value="C:cytosol"/>
    <property type="evidence" value="ECO:0007669"/>
    <property type="project" value="TreeGrafter"/>
</dbReference>
<dbReference type="GO" id="GO:0005524">
    <property type="term" value="F:ATP binding"/>
    <property type="evidence" value="ECO:0007669"/>
    <property type="project" value="UniProtKB-UniRule"/>
</dbReference>
<dbReference type="GO" id="GO:0004820">
    <property type="term" value="F:glycine-tRNA ligase activity"/>
    <property type="evidence" value="ECO:0007669"/>
    <property type="project" value="UniProtKB-UniRule"/>
</dbReference>
<dbReference type="GO" id="GO:0006426">
    <property type="term" value="P:glycyl-tRNA aminoacylation"/>
    <property type="evidence" value="ECO:0007669"/>
    <property type="project" value="UniProtKB-UniRule"/>
</dbReference>
<dbReference type="CDD" id="cd00733">
    <property type="entry name" value="GlyRS_alpha_core"/>
    <property type="match status" value="1"/>
</dbReference>
<dbReference type="FunFam" id="3.30.930.10:FF:000006">
    <property type="entry name" value="Glycine--tRNA ligase alpha subunit"/>
    <property type="match status" value="1"/>
</dbReference>
<dbReference type="Gene3D" id="3.30.930.10">
    <property type="entry name" value="Bira Bifunctional Protein, Domain 2"/>
    <property type="match status" value="1"/>
</dbReference>
<dbReference type="Gene3D" id="1.20.58.180">
    <property type="entry name" value="Class II aaRS and biotin synthetases, domain 2"/>
    <property type="match status" value="1"/>
</dbReference>
<dbReference type="HAMAP" id="MF_00254">
    <property type="entry name" value="Gly_tRNA_synth_alpha"/>
    <property type="match status" value="1"/>
</dbReference>
<dbReference type="InterPro" id="IPR045864">
    <property type="entry name" value="aa-tRNA-synth_II/BPL/LPL"/>
</dbReference>
<dbReference type="InterPro" id="IPR006194">
    <property type="entry name" value="Gly-tRNA-synth_heterodimer"/>
</dbReference>
<dbReference type="InterPro" id="IPR002310">
    <property type="entry name" value="Gly-tRNA_ligase_asu"/>
</dbReference>
<dbReference type="NCBIfam" id="TIGR00388">
    <property type="entry name" value="glyQ"/>
    <property type="match status" value="1"/>
</dbReference>
<dbReference type="NCBIfam" id="NF006827">
    <property type="entry name" value="PRK09348.1"/>
    <property type="match status" value="1"/>
</dbReference>
<dbReference type="PANTHER" id="PTHR30075:SF2">
    <property type="entry name" value="GLYCINE--TRNA LIGASE, CHLOROPLASTIC_MITOCHONDRIAL 2"/>
    <property type="match status" value="1"/>
</dbReference>
<dbReference type="PANTHER" id="PTHR30075">
    <property type="entry name" value="GLYCYL-TRNA SYNTHETASE"/>
    <property type="match status" value="1"/>
</dbReference>
<dbReference type="Pfam" id="PF02091">
    <property type="entry name" value="tRNA-synt_2e"/>
    <property type="match status" value="1"/>
</dbReference>
<dbReference type="PRINTS" id="PR01044">
    <property type="entry name" value="TRNASYNTHGA"/>
</dbReference>
<dbReference type="SUPFAM" id="SSF55681">
    <property type="entry name" value="Class II aaRS and biotin synthetases"/>
    <property type="match status" value="1"/>
</dbReference>
<dbReference type="PROSITE" id="PS50861">
    <property type="entry name" value="AA_TRNA_LIGASE_II_GLYAB"/>
    <property type="match status" value="1"/>
</dbReference>
<name>SYGA_VIBVU</name>